<sequence length="66" mass="7374">MAEKKKGKTITVEQIGSPIRRPKEQRATLVGLGLNKLHRRSTLEDTPSVRGMIAKVEHLVRVVDEA</sequence>
<proteinExistence type="inferred from homology"/>
<accession>Q11HS0</accession>
<gene>
    <name evidence="1" type="primary">rpmD</name>
    <name type="ordered locus">Meso_1660</name>
</gene>
<protein>
    <recommendedName>
        <fullName evidence="1">Large ribosomal subunit protein uL30</fullName>
    </recommendedName>
    <alternativeName>
        <fullName evidence="2">50S ribosomal protein L30</fullName>
    </alternativeName>
</protein>
<dbReference type="EMBL" id="CP000390">
    <property type="protein sequence ID" value="ABG63055.1"/>
    <property type="molecule type" value="Genomic_DNA"/>
</dbReference>
<dbReference type="SMR" id="Q11HS0"/>
<dbReference type="STRING" id="266779.Meso_1660"/>
<dbReference type="KEGG" id="mes:Meso_1660"/>
<dbReference type="eggNOG" id="COG1841">
    <property type="taxonomic scope" value="Bacteria"/>
</dbReference>
<dbReference type="HOGENOM" id="CLU_131047_1_2_5"/>
<dbReference type="OrthoDB" id="9812790at2"/>
<dbReference type="GO" id="GO:0022625">
    <property type="term" value="C:cytosolic large ribosomal subunit"/>
    <property type="evidence" value="ECO:0007669"/>
    <property type="project" value="TreeGrafter"/>
</dbReference>
<dbReference type="GO" id="GO:0003735">
    <property type="term" value="F:structural constituent of ribosome"/>
    <property type="evidence" value="ECO:0007669"/>
    <property type="project" value="InterPro"/>
</dbReference>
<dbReference type="GO" id="GO:0006412">
    <property type="term" value="P:translation"/>
    <property type="evidence" value="ECO:0007669"/>
    <property type="project" value="UniProtKB-UniRule"/>
</dbReference>
<dbReference type="CDD" id="cd01658">
    <property type="entry name" value="Ribosomal_L30"/>
    <property type="match status" value="1"/>
</dbReference>
<dbReference type="Gene3D" id="3.30.1390.20">
    <property type="entry name" value="Ribosomal protein L30, ferredoxin-like fold domain"/>
    <property type="match status" value="1"/>
</dbReference>
<dbReference type="HAMAP" id="MF_01371_B">
    <property type="entry name" value="Ribosomal_uL30_B"/>
    <property type="match status" value="1"/>
</dbReference>
<dbReference type="InterPro" id="IPR036919">
    <property type="entry name" value="Ribo_uL30_ferredoxin-like_sf"/>
</dbReference>
<dbReference type="InterPro" id="IPR005996">
    <property type="entry name" value="Ribosomal_uL30_bac-type"/>
</dbReference>
<dbReference type="InterPro" id="IPR016082">
    <property type="entry name" value="Ribosomal_uL30_ferredoxin-like"/>
</dbReference>
<dbReference type="NCBIfam" id="TIGR01308">
    <property type="entry name" value="rpmD_bact"/>
    <property type="match status" value="1"/>
</dbReference>
<dbReference type="PANTHER" id="PTHR15892:SF2">
    <property type="entry name" value="LARGE RIBOSOMAL SUBUNIT PROTEIN UL30M"/>
    <property type="match status" value="1"/>
</dbReference>
<dbReference type="PANTHER" id="PTHR15892">
    <property type="entry name" value="MITOCHONDRIAL RIBOSOMAL PROTEIN L30"/>
    <property type="match status" value="1"/>
</dbReference>
<dbReference type="Pfam" id="PF00327">
    <property type="entry name" value="Ribosomal_L30"/>
    <property type="match status" value="1"/>
</dbReference>
<dbReference type="PIRSF" id="PIRSF002211">
    <property type="entry name" value="Ribosomal_L30_bac-type"/>
    <property type="match status" value="1"/>
</dbReference>
<dbReference type="SUPFAM" id="SSF55129">
    <property type="entry name" value="Ribosomal protein L30p/L7e"/>
    <property type="match status" value="1"/>
</dbReference>
<evidence type="ECO:0000255" key="1">
    <source>
        <dbReference type="HAMAP-Rule" id="MF_01371"/>
    </source>
</evidence>
<evidence type="ECO:0000305" key="2"/>
<name>RL30_CHESB</name>
<organism>
    <name type="scientific">Chelativorans sp. (strain BNC1)</name>
    <dbReference type="NCBI Taxonomy" id="266779"/>
    <lineage>
        <taxon>Bacteria</taxon>
        <taxon>Pseudomonadati</taxon>
        <taxon>Pseudomonadota</taxon>
        <taxon>Alphaproteobacteria</taxon>
        <taxon>Hyphomicrobiales</taxon>
        <taxon>Phyllobacteriaceae</taxon>
        <taxon>Chelativorans</taxon>
    </lineage>
</organism>
<comment type="subunit">
    <text evidence="1">Part of the 50S ribosomal subunit.</text>
</comment>
<comment type="similarity">
    <text evidence="1">Belongs to the universal ribosomal protein uL30 family.</text>
</comment>
<keyword id="KW-0687">Ribonucleoprotein</keyword>
<keyword id="KW-0689">Ribosomal protein</keyword>
<reference key="1">
    <citation type="submission" date="2006-06" db="EMBL/GenBank/DDBJ databases">
        <title>Complete sequence of chromosome of Mesorhizobium sp. BNC1.</title>
        <authorList>
            <consortium name="US DOE Joint Genome Institute"/>
            <person name="Copeland A."/>
            <person name="Lucas S."/>
            <person name="Lapidus A."/>
            <person name="Barry K."/>
            <person name="Detter J.C."/>
            <person name="Glavina del Rio T."/>
            <person name="Hammon N."/>
            <person name="Israni S."/>
            <person name="Dalin E."/>
            <person name="Tice H."/>
            <person name="Pitluck S."/>
            <person name="Chertkov O."/>
            <person name="Brettin T."/>
            <person name="Bruce D."/>
            <person name="Han C."/>
            <person name="Tapia R."/>
            <person name="Gilna P."/>
            <person name="Schmutz J."/>
            <person name="Larimer F."/>
            <person name="Land M."/>
            <person name="Hauser L."/>
            <person name="Kyrpides N."/>
            <person name="Mikhailova N."/>
            <person name="Richardson P."/>
        </authorList>
    </citation>
    <scope>NUCLEOTIDE SEQUENCE [LARGE SCALE GENOMIC DNA]</scope>
    <source>
        <strain>BNC1</strain>
    </source>
</reference>
<feature type="chain" id="PRO_0000347115" description="Large ribosomal subunit protein uL30">
    <location>
        <begin position="1"/>
        <end position="66"/>
    </location>
</feature>